<keyword id="KW-0067">ATP-binding</keyword>
<keyword id="KW-0997">Cell inner membrane</keyword>
<keyword id="KW-1003">Cell membrane</keyword>
<keyword id="KW-0472">Membrane</keyword>
<keyword id="KW-0547">Nucleotide-binding</keyword>
<keyword id="KW-0592">Phosphate transport</keyword>
<keyword id="KW-1185">Reference proteome</keyword>
<keyword id="KW-1278">Translocase</keyword>
<keyword id="KW-0813">Transport</keyword>
<reference key="1">
    <citation type="journal article" date="2009" name="Proc. Natl. Acad. Sci. U.S.A.">
        <title>The genomic basis of trophic strategy in marine bacteria.</title>
        <authorList>
            <person name="Lauro F.M."/>
            <person name="McDougald D."/>
            <person name="Thomas T."/>
            <person name="Williams T.J."/>
            <person name="Egan S."/>
            <person name="Rice S."/>
            <person name="DeMaere M.Z."/>
            <person name="Ting L."/>
            <person name="Ertan H."/>
            <person name="Johnson J."/>
            <person name="Ferriera S."/>
            <person name="Lapidus A."/>
            <person name="Anderson I."/>
            <person name="Kyrpides N."/>
            <person name="Munk A.C."/>
            <person name="Detter C."/>
            <person name="Han C.S."/>
            <person name="Brown M.V."/>
            <person name="Robb F.T."/>
            <person name="Kjelleberg S."/>
            <person name="Cavicchioli R."/>
        </authorList>
    </citation>
    <scope>NUCLEOTIDE SEQUENCE [LARGE SCALE GENOMIC DNA]</scope>
    <source>
        <strain>DSM 13593 / LMG 18877 / RB2256</strain>
    </source>
</reference>
<name>PSTB_SPHAL</name>
<dbReference type="EC" id="7.3.2.1" evidence="1"/>
<dbReference type="EMBL" id="CP000356">
    <property type="protein sequence ID" value="ABF52541.1"/>
    <property type="molecule type" value="Genomic_DNA"/>
</dbReference>
<dbReference type="RefSeq" id="WP_011541131.1">
    <property type="nucleotide sequence ID" value="NC_008048.1"/>
</dbReference>
<dbReference type="SMR" id="Q1GUY1"/>
<dbReference type="STRING" id="317655.Sala_0823"/>
<dbReference type="KEGG" id="sal:Sala_0823"/>
<dbReference type="eggNOG" id="COG1117">
    <property type="taxonomic scope" value="Bacteria"/>
</dbReference>
<dbReference type="HOGENOM" id="CLU_000604_1_22_5"/>
<dbReference type="OrthoDB" id="9802264at2"/>
<dbReference type="Proteomes" id="UP000006578">
    <property type="component" value="Chromosome"/>
</dbReference>
<dbReference type="GO" id="GO:0005886">
    <property type="term" value="C:plasma membrane"/>
    <property type="evidence" value="ECO:0007669"/>
    <property type="project" value="UniProtKB-SubCell"/>
</dbReference>
<dbReference type="GO" id="GO:0005524">
    <property type="term" value="F:ATP binding"/>
    <property type="evidence" value="ECO:0007669"/>
    <property type="project" value="UniProtKB-KW"/>
</dbReference>
<dbReference type="GO" id="GO:0016887">
    <property type="term" value="F:ATP hydrolysis activity"/>
    <property type="evidence" value="ECO:0007669"/>
    <property type="project" value="InterPro"/>
</dbReference>
<dbReference type="GO" id="GO:0015415">
    <property type="term" value="F:ATPase-coupled phosphate ion transmembrane transporter activity"/>
    <property type="evidence" value="ECO:0007669"/>
    <property type="project" value="UniProtKB-EC"/>
</dbReference>
<dbReference type="GO" id="GO:0035435">
    <property type="term" value="P:phosphate ion transmembrane transport"/>
    <property type="evidence" value="ECO:0007669"/>
    <property type="project" value="InterPro"/>
</dbReference>
<dbReference type="CDD" id="cd03260">
    <property type="entry name" value="ABC_PstB_phosphate_transporter"/>
    <property type="match status" value="1"/>
</dbReference>
<dbReference type="Gene3D" id="3.40.50.300">
    <property type="entry name" value="P-loop containing nucleotide triphosphate hydrolases"/>
    <property type="match status" value="1"/>
</dbReference>
<dbReference type="InterPro" id="IPR003593">
    <property type="entry name" value="AAA+_ATPase"/>
</dbReference>
<dbReference type="InterPro" id="IPR003439">
    <property type="entry name" value="ABC_transporter-like_ATP-bd"/>
</dbReference>
<dbReference type="InterPro" id="IPR017871">
    <property type="entry name" value="ABC_transporter-like_CS"/>
</dbReference>
<dbReference type="InterPro" id="IPR027417">
    <property type="entry name" value="P-loop_NTPase"/>
</dbReference>
<dbReference type="InterPro" id="IPR005670">
    <property type="entry name" value="PstB-like"/>
</dbReference>
<dbReference type="NCBIfam" id="TIGR00972">
    <property type="entry name" value="3a0107s01c2"/>
    <property type="match status" value="1"/>
</dbReference>
<dbReference type="PANTHER" id="PTHR43423">
    <property type="entry name" value="ABC TRANSPORTER I FAMILY MEMBER 17"/>
    <property type="match status" value="1"/>
</dbReference>
<dbReference type="PANTHER" id="PTHR43423:SF1">
    <property type="entry name" value="ABC TRANSPORTER I FAMILY MEMBER 17"/>
    <property type="match status" value="1"/>
</dbReference>
<dbReference type="Pfam" id="PF00005">
    <property type="entry name" value="ABC_tran"/>
    <property type="match status" value="1"/>
</dbReference>
<dbReference type="SMART" id="SM00382">
    <property type="entry name" value="AAA"/>
    <property type="match status" value="1"/>
</dbReference>
<dbReference type="SUPFAM" id="SSF52540">
    <property type="entry name" value="P-loop containing nucleoside triphosphate hydrolases"/>
    <property type="match status" value="1"/>
</dbReference>
<dbReference type="PROSITE" id="PS00211">
    <property type="entry name" value="ABC_TRANSPORTER_1"/>
    <property type="match status" value="1"/>
</dbReference>
<dbReference type="PROSITE" id="PS50893">
    <property type="entry name" value="ABC_TRANSPORTER_2"/>
    <property type="match status" value="1"/>
</dbReference>
<dbReference type="PROSITE" id="PS51238">
    <property type="entry name" value="PSTB"/>
    <property type="match status" value="1"/>
</dbReference>
<comment type="function">
    <text evidence="1">Part of the ABC transporter complex PstSACB involved in phosphate import. Responsible for energy coupling to the transport system.</text>
</comment>
<comment type="catalytic activity">
    <reaction evidence="1">
        <text>phosphate(out) + ATP + H2O = ADP + 2 phosphate(in) + H(+)</text>
        <dbReference type="Rhea" id="RHEA:24440"/>
        <dbReference type="ChEBI" id="CHEBI:15377"/>
        <dbReference type="ChEBI" id="CHEBI:15378"/>
        <dbReference type="ChEBI" id="CHEBI:30616"/>
        <dbReference type="ChEBI" id="CHEBI:43474"/>
        <dbReference type="ChEBI" id="CHEBI:456216"/>
        <dbReference type="EC" id="7.3.2.1"/>
    </reaction>
</comment>
<comment type="subunit">
    <text evidence="1">The complex is composed of two ATP-binding proteins (PstB), two transmembrane proteins (PstC and PstA) and a solute-binding protein (PstS).</text>
</comment>
<comment type="subcellular location">
    <subcellularLocation>
        <location evidence="1">Cell inner membrane</location>
        <topology evidence="1">Peripheral membrane protein</topology>
    </subcellularLocation>
</comment>
<comment type="similarity">
    <text evidence="1">Belongs to the ABC transporter superfamily. Phosphate importer (TC 3.A.1.7) family.</text>
</comment>
<evidence type="ECO:0000255" key="1">
    <source>
        <dbReference type="HAMAP-Rule" id="MF_01702"/>
    </source>
</evidence>
<accession>Q1GUY1</accession>
<protein>
    <recommendedName>
        <fullName evidence="1">Phosphate import ATP-binding protein PstB</fullName>
        <ecNumber evidence="1">7.3.2.1</ecNumber>
    </recommendedName>
    <alternativeName>
        <fullName evidence="1">ABC phosphate transporter</fullName>
    </alternativeName>
    <alternativeName>
        <fullName evidence="1">Phosphate-transporting ATPase</fullName>
    </alternativeName>
</protein>
<sequence length="260" mass="28532">MTNDDLTITDPKMRAQGVNVFYGDKQAINNVSIDVGTDLVTAFIGPSGCGKSTFLRSLNRMNDTVASAKVTGKIELDGEDIYAPSMDVVQLRARVGMVFQKPNPFPKSIYDNVGYGPRIHGLAPSKADLDVVVERALVRAGLWDEVKDRLNESGTALSGGQQQRLCIARAIAVDPEVILMDEPCSALDPIATAKIEELIHELRGKYAIVIVTHNMQQAARVSQRTAFFHLGTLVEYGKTTDIFTNPKQERTKDYITGRYG</sequence>
<organism>
    <name type="scientific">Sphingopyxis alaskensis (strain DSM 13593 / LMG 18877 / RB2256)</name>
    <name type="common">Sphingomonas alaskensis</name>
    <dbReference type="NCBI Taxonomy" id="317655"/>
    <lineage>
        <taxon>Bacteria</taxon>
        <taxon>Pseudomonadati</taxon>
        <taxon>Pseudomonadota</taxon>
        <taxon>Alphaproteobacteria</taxon>
        <taxon>Sphingomonadales</taxon>
        <taxon>Sphingomonadaceae</taxon>
        <taxon>Sphingopyxis</taxon>
    </lineage>
</organism>
<feature type="chain" id="PRO_0000272532" description="Phosphate import ATP-binding protein PstB">
    <location>
        <begin position="1"/>
        <end position="260"/>
    </location>
</feature>
<feature type="domain" description="ABC transporter" evidence="1">
    <location>
        <begin position="13"/>
        <end position="255"/>
    </location>
</feature>
<feature type="binding site" evidence="1">
    <location>
        <begin position="45"/>
        <end position="52"/>
    </location>
    <ligand>
        <name>ATP</name>
        <dbReference type="ChEBI" id="CHEBI:30616"/>
    </ligand>
</feature>
<proteinExistence type="inferred from homology"/>
<gene>
    <name evidence="1" type="primary">pstB</name>
    <name type="ordered locus">Sala_0823</name>
</gene>